<organism>
    <name type="scientific">Aglaothamnion neglectum</name>
    <name type="common">Red alga</name>
    <dbReference type="NCBI Taxonomy" id="2765"/>
    <lineage>
        <taxon>Eukaryota</taxon>
        <taxon>Rhodophyta</taxon>
        <taxon>Florideophyceae</taxon>
        <taxon>Rhodymeniophycidae</taxon>
        <taxon>Ceramiales</taxon>
        <taxon>Callithamniaceae</taxon>
        <taxon>Aglaothamnion</taxon>
    </lineage>
</organism>
<feature type="initiator methionine" description="Removed" evidence="1">
    <location>
        <position position="1"/>
    </location>
</feature>
<feature type="chain" id="PRO_0000199080" description="Allophycocyanin alpha chain">
    <location>
        <begin position="2"/>
        <end position="161"/>
    </location>
</feature>
<feature type="binding site" description="covalent" evidence="1">
    <location>
        <position position="81"/>
    </location>
    <ligand>
        <name>(2R,3E)-phycocyanobilin</name>
        <dbReference type="ChEBI" id="CHEBI:85275"/>
    </ligand>
</feature>
<feature type="modified residue" description="N4-methylasparagine" evidence="1">
    <location>
        <position position="71"/>
    </location>
</feature>
<evidence type="ECO:0000250" key="1"/>
<evidence type="ECO:0000305" key="2"/>
<sequence>MSIVTKSIVNADAEARYLSPGELDRIKSFVLSGQRRLNIAQILTDNRENIVKQGGQQLFQKRTDIVSPGGNAYGEEMTATCLRDLDYYLRLVTYGIVAGDVTPIEEIGLVGVKEMYNSLGTPISGVAEGVRCMKAIACSLLSGEDSAEAGFYFDYTLGAMQ</sequence>
<name>PHAA_AGLNE</name>
<gene>
    <name type="primary">apcA</name>
</gene>
<protein>
    <recommendedName>
        <fullName>Allophycocyanin alpha chain</fullName>
    </recommendedName>
</protein>
<proteinExistence type="inferred from homology"/>
<accession>P28555</accession>
<comment type="function">
    <text>Light-harvesting photosynthetic bile pigment-protein from the phycobiliprotein complex. Allophycocyanin has a maximum absorption at approximately 650 nanometers.</text>
</comment>
<comment type="subunit">
    <text evidence="1">Heterodimer of an alpha and a beta chain.</text>
</comment>
<comment type="subcellular location">
    <subcellularLocation>
        <location evidence="1">Plastid</location>
        <location evidence="1">Chloroplast thylakoid membrane</location>
        <topology evidence="1">Peripheral membrane protein</topology>
        <orientation evidence="1">Stromal side</orientation>
    </subcellularLocation>
    <text evidence="1">Forms the core of the phycobilisome.</text>
</comment>
<comment type="PTM">
    <text evidence="1">Contains one covalently linked phycocyanobilin chromophore.</text>
</comment>
<comment type="similarity">
    <text evidence="2">Belongs to the phycobiliprotein family.</text>
</comment>
<dbReference type="EMBL" id="Z11905">
    <property type="protein sequence ID" value="CAA77958.1"/>
    <property type="molecule type" value="Genomic_DNA"/>
</dbReference>
<dbReference type="PIR" id="S30937">
    <property type="entry name" value="S30937"/>
</dbReference>
<dbReference type="SMR" id="P28555"/>
<dbReference type="GO" id="GO:0009535">
    <property type="term" value="C:chloroplast thylakoid membrane"/>
    <property type="evidence" value="ECO:0007669"/>
    <property type="project" value="UniProtKB-SubCell"/>
</dbReference>
<dbReference type="GO" id="GO:0030089">
    <property type="term" value="C:phycobilisome"/>
    <property type="evidence" value="ECO:0007669"/>
    <property type="project" value="UniProtKB-KW"/>
</dbReference>
<dbReference type="GO" id="GO:0015979">
    <property type="term" value="P:photosynthesis"/>
    <property type="evidence" value="ECO:0007669"/>
    <property type="project" value="UniProtKB-KW"/>
</dbReference>
<dbReference type="CDD" id="cd12125">
    <property type="entry name" value="APC_alpha"/>
    <property type="match status" value="1"/>
</dbReference>
<dbReference type="Gene3D" id="1.10.490.20">
    <property type="entry name" value="Phycocyanins"/>
    <property type="match status" value="1"/>
</dbReference>
<dbReference type="InterPro" id="IPR009050">
    <property type="entry name" value="Globin-like_sf"/>
</dbReference>
<dbReference type="InterPro" id="IPR012128">
    <property type="entry name" value="Phycobilisome_asu/bsu"/>
</dbReference>
<dbReference type="InterPro" id="IPR038719">
    <property type="entry name" value="Phycobilisome_asu/bsu_sf"/>
</dbReference>
<dbReference type="PANTHER" id="PTHR34011:SF2">
    <property type="entry name" value="ALLOPHYCOCYANIN ALPHA CHAIN"/>
    <property type="match status" value="1"/>
</dbReference>
<dbReference type="PANTHER" id="PTHR34011">
    <property type="entry name" value="PHYCOBILISOME 32.1 KDA LINKER POLYPEPTIDE, PHYCOCYANIN-ASSOCIATED, ROD 2-RELATED"/>
    <property type="match status" value="1"/>
</dbReference>
<dbReference type="Pfam" id="PF00502">
    <property type="entry name" value="Phycobilisome"/>
    <property type="match status" value="1"/>
</dbReference>
<dbReference type="PIRSF" id="PIRSF000081">
    <property type="entry name" value="Phycocyanin"/>
    <property type="match status" value="1"/>
</dbReference>
<dbReference type="SUPFAM" id="SSF46458">
    <property type="entry name" value="Globin-like"/>
    <property type="match status" value="1"/>
</dbReference>
<keyword id="KW-0042">Antenna complex</keyword>
<keyword id="KW-0089">Bile pigment</keyword>
<keyword id="KW-0150">Chloroplast</keyword>
<keyword id="KW-0157">Chromophore</keyword>
<keyword id="KW-0249">Electron transport</keyword>
<keyword id="KW-0472">Membrane</keyword>
<keyword id="KW-0488">Methylation</keyword>
<keyword id="KW-0602">Photosynthesis</keyword>
<keyword id="KW-0605">Phycobilisome</keyword>
<keyword id="KW-0934">Plastid</keyword>
<keyword id="KW-0793">Thylakoid</keyword>
<keyword id="KW-0813">Transport</keyword>
<geneLocation type="chloroplast"/>
<reference key="1">
    <citation type="journal article" date="1993" name="Plant Mol. Biol.">
        <title>Characterization and transcript analysis of the major phycobiliprotein subunit genes from Aglaothamnion neglectum (Rhodophyta).</title>
        <authorList>
            <person name="Apt K.E."/>
            <person name="Grossman A.R."/>
        </authorList>
    </citation>
    <scope>NUCLEOTIDE SEQUENCE [GENOMIC DNA]</scope>
</reference>